<gene>
    <name evidence="1" type="primary">rplQ</name>
    <name type="ordered locus">SG4024</name>
</gene>
<organism>
    <name type="scientific">Salmonella gallinarum (strain 287/91 / NCTC 13346)</name>
    <dbReference type="NCBI Taxonomy" id="550538"/>
    <lineage>
        <taxon>Bacteria</taxon>
        <taxon>Pseudomonadati</taxon>
        <taxon>Pseudomonadota</taxon>
        <taxon>Gammaproteobacteria</taxon>
        <taxon>Enterobacterales</taxon>
        <taxon>Enterobacteriaceae</taxon>
        <taxon>Salmonella</taxon>
    </lineage>
</organism>
<comment type="subunit">
    <text evidence="1">Part of the 50S ribosomal subunit. Contacts protein L32.</text>
</comment>
<comment type="similarity">
    <text evidence="1">Belongs to the bacterial ribosomal protein bL17 family.</text>
</comment>
<evidence type="ECO:0000255" key="1">
    <source>
        <dbReference type="HAMAP-Rule" id="MF_01368"/>
    </source>
</evidence>
<evidence type="ECO:0000305" key="2"/>
<feature type="chain" id="PRO_1000144478" description="Large ribosomal subunit protein bL17">
    <location>
        <begin position="1"/>
        <end position="127"/>
    </location>
</feature>
<name>RL17_SALG2</name>
<keyword id="KW-0687">Ribonucleoprotein</keyword>
<keyword id="KW-0689">Ribosomal protein</keyword>
<dbReference type="EMBL" id="AM933173">
    <property type="protein sequence ID" value="CAR39795.1"/>
    <property type="molecule type" value="Genomic_DNA"/>
</dbReference>
<dbReference type="RefSeq" id="WP_001216370.1">
    <property type="nucleotide sequence ID" value="NC_011274.1"/>
</dbReference>
<dbReference type="SMR" id="B5RH41"/>
<dbReference type="GeneID" id="89546962"/>
<dbReference type="KEGG" id="seg:SG4024"/>
<dbReference type="HOGENOM" id="CLU_074407_2_0_6"/>
<dbReference type="Proteomes" id="UP000008321">
    <property type="component" value="Chromosome"/>
</dbReference>
<dbReference type="GO" id="GO:0022625">
    <property type="term" value="C:cytosolic large ribosomal subunit"/>
    <property type="evidence" value="ECO:0007669"/>
    <property type="project" value="TreeGrafter"/>
</dbReference>
<dbReference type="GO" id="GO:0003735">
    <property type="term" value="F:structural constituent of ribosome"/>
    <property type="evidence" value="ECO:0007669"/>
    <property type="project" value="InterPro"/>
</dbReference>
<dbReference type="GO" id="GO:0006412">
    <property type="term" value="P:translation"/>
    <property type="evidence" value="ECO:0007669"/>
    <property type="project" value="UniProtKB-UniRule"/>
</dbReference>
<dbReference type="FunFam" id="3.90.1030.10:FF:000001">
    <property type="entry name" value="50S ribosomal protein L17"/>
    <property type="match status" value="1"/>
</dbReference>
<dbReference type="Gene3D" id="3.90.1030.10">
    <property type="entry name" value="Ribosomal protein L17"/>
    <property type="match status" value="1"/>
</dbReference>
<dbReference type="HAMAP" id="MF_01368">
    <property type="entry name" value="Ribosomal_bL17"/>
    <property type="match status" value="1"/>
</dbReference>
<dbReference type="InterPro" id="IPR000456">
    <property type="entry name" value="Ribosomal_bL17"/>
</dbReference>
<dbReference type="InterPro" id="IPR047859">
    <property type="entry name" value="Ribosomal_bL17_CS"/>
</dbReference>
<dbReference type="InterPro" id="IPR036373">
    <property type="entry name" value="Ribosomal_bL17_sf"/>
</dbReference>
<dbReference type="NCBIfam" id="TIGR00059">
    <property type="entry name" value="L17"/>
    <property type="match status" value="1"/>
</dbReference>
<dbReference type="PANTHER" id="PTHR14413:SF16">
    <property type="entry name" value="LARGE RIBOSOMAL SUBUNIT PROTEIN BL17M"/>
    <property type="match status" value="1"/>
</dbReference>
<dbReference type="PANTHER" id="PTHR14413">
    <property type="entry name" value="RIBOSOMAL PROTEIN L17"/>
    <property type="match status" value="1"/>
</dbReference>
<dbReference type="Pfam" id="PF01196">
    <property type="entry name" value="Ribosomal_L17"/>
    <property type="match status" value="1"/>
</dbReference>
<dbReference type="SUPFAM" id="SSF64263">
    <property type="entry name" value="Prokaryotic ribosomal protein L17"/>
    <property type="match status" value="1"/>
</dbReference>
<dbReference type="PROSITE" id="PS01167">
    <property type="entry name" value="RIBOSOMAL_L17"/>
    <property type="match status" value="1"/>
</dbReference>
<proteinExistence type="inferred from homology"/>
<accession>B5RH41</accession>
<protein>
    <recommendedName>
        <fullName evidence="1">Large ribosomal subunit protein bL17</fullName>
    </recommendedName>
    <alternativeName>
        <fullName evidence="2">50S ribosomal protein L17</fullName>
    </alternativeName>
</protein>
<sequence>MRHRKSGRQLNRNSSHRQAMFRNMAGSLVRHEIIKTTLPKAKELRRVVEPLITLAKTDSVANRRLAFARTRDNEIVAKLFNELGPRFASRAGGYTRILKCGFRAGDNAPMAYIELVDRSEKTEAAAE</sequence>
<reference key="1">
    <citation type="journal article" date="2008" name="Genome Res.">
        <title>Comparative genome analysis of Salmonella enteritidis PT4 and Salmonella gallinarum 287/91 provides insights into evolutionary and host adaptation pathways.</title>
        <authorList>
            <person name="Thomson N.R."/>
            <person name="Clayton D.J."/>
            <person name="Windhorst D."/>
            <person name="Vernikos G."/>
            <person name="Davidson S."/>
            <person name="Churcher C."/>
            <person name="Quail M.A."/>
            <person name="Stevens M."/>
            <person name="Jones M.A."/>
            <person name="Watson M."/>
            <person name="Barron A."/>
            <person name="Layton A."/>
            <person name="Pickard D."/>
            <person name="Kingsley R.A."/>
            <person name="Bignell A."/>
            <person name="Clark L."/>
            <person name="Harris B."/>
            <person name="Ormond D."/>
            <person name="Abdellah Z."/>
            <person name="Brooks K."/>
            <person name="Cherevach I."/>
            <person name="Chillingworth T."/>
            <person name="Woodward J."/>
            <person name="Norberczak H."/>
            <person name="Lord A."/>
            <person name="Arrowsmith C."/>
            <person name="Jagels K."/>
            <person name="Moule S."/>
            <person name="Mungall K."/>
            <person name="Saunders M."/>
            <person name="Whitehead S."/>
            <person name="Chabalgoity J.A."/>
            <person name="Maskell D."/>
            <person name="Humphreys T."/>
            <person name="Roberts M."/>
            <person name="Barrow P.A."/>
            <person name="Dougan G."/>
            <person name="Parkhill J."/>
        </authorList>
    </citation>
    <scope>NUCLEOTIDE SEQUENCE [LARGE SCALE GENOMIC DNA]</scope>
    <source>
        <strain>287/91 / NCTC 13346</strain>
    </source>
</reference>